<gene>
    <name evidence="1" type="primary">pdxK</name>
    <name type="ordered locus">BAV1601</name>
</gene>
<accession>Q2L1P5</accession>
<reference key="1">
    <citation type="journal article" date="2006" name="J. Bacteriol.">
        <title>Comparison of the genome sequence of the poultry pathogen Bordetella avium with those of B. bronchiseptica, B. pertussis, and B. parapertussis reveals extensive diversity in surface structures associated with host interaction.</title>
        <authorList>
            <person name="Sebaihia M."/>
            <person name="Preston A."/>
            <person name="Maskell D.J."/>
            <person name="Kuzmiak H."/>
            <person name="Connell T.D."/>
            <person name="King N.D."/>
            <person name="Orndorff P.E."/>
            <person name="Miyamoto D.M."/>
            <person name="Thomson N.R."/>
            <person name="Harris D."/>
            <person name="Goble A."/>
            <person name="Lord A."/>
            <person name="Murphy L."/>
            <person name="Quail M.A."/>
            <person name="Rutter S."/>
            <person name="Squares R."/>
            <person name="Squares S."/>
            <person name="Woodward J."/>
            <person name="Parkhill J."/>
            <person name="Temple L.M."/>
        </authorList>
    </citation>
    <scope>NUCLEOTIDE SEQUENCE [LARGE SCALE GENOMIC DNA]</scope>
    <source>
        <strain>197N</strain>
    </source>
</reference>
<dbReference type="EC" id="2.7.1.35" evidence="1"/>
<dbReference type="EMBL" id="AM167904">
    <property type="protein sequence ID" value="CAJ49211.1"/>
    <property type="molecule type" value="Genomic_DNA"/>
</dbReference>
<dbReference type="RefSeq" id="WP_012417273.1">
    <property type="nucleotide sequence ID" value="NC_010645.1"/>
</dbReference>
<dbReference type="SMR" id="Q2L1P5"/>
<dbReference type="STRING" id="360910.BAV1601"/>
<dbReference type="GeneID" id="92935336"/>
<dbReference type="KEGG" id="bav:BAV1601"/>
<dbReference type="eggNOG" id="COG2240">
    <property type="taxonomic scope" value="Bacteria"/>
</dbReference>
<dbReference type="HOGENOM" id="CLU_046496_3_1_4"/>
<dbReference type="OrthoDB" id="9800808at2"/>
<dbReference type="UniPathway" id="UPA01068">
    <property type="reaction ID" value="UER00298"/>
</dbReference>
<dbReference type="UniPathway" id="UPA01068">
    <property type="reaction ID" value="UER00299"/>
</dbReference>
<dbReference type="UniPathway" id="UPA01068">
    <property type="reaction ID" value="UER00300"/>
</dbReference>
<dbReference type="Proteomes" id="UP000001977">
    <property type="component" value="Chromosome"/>
</dbReference>
<dbReference type="GO" id="GO:0005829">
    <property type="term" value="C:cytosol"/>
    <property type="evidence" value="ECO:0007669"/>
    <property type="project" value="TreeGrafter"/>
</dbReference>
<dbReference type="GO" id="GO:0005524">
    <property type="term" value="F:ATP binding"/>
    <property type="evidence" value="ECO:0007669"/>
    <property type="project" value="UniProtKB-UniRule"/>
</dbReference>
<dbReference type="GO" id="GO:0008902">
    <property type="term" value="F:hydroxymethylpyrimidine kinase activity"/>
    <property type="evidence" value="ECO:0007669"/>
    <property type="project" value="TreeGrafter"/>
</dbReference>
<dbReference type="GO" id="GO:0000287">
    <property type="term" value="F:magnesium ion binding"/>
    <property type="evidence" value="ECO:0007669"/>
    <property type="project" value="UniProtKB-UniRule"/>
</dbReference>
<dbReference type="GO" id="GO:0008478">
    <property type="term" value="F:pyridoxal kinase activity"/>
    <property type="evidence" value="ECO:0007669"/>
    <property type="project" value="UniProtKB-UniRule"/>
</dbReference>
<dbReference type="GO" id="GO:0008270">
    <property type="term" value="F:zinc ion binding"/>
    <property type="evidence" value="ECO:0007669"/>
    <property type="project" value="UniProtKB-UniRule"/>
</dbReference>
<dbReference type="GO" id="GO:0009443">
    <property type="term" value="P:pyridoxal 5'-phosphate salvage"/>
    <property type="evidence" value="ECO:0007669"/>
    <property type="project" value="UniProtKB-UniRule"/>
</dbReference>
<dbReference type="CDD" id="cd01173">
    <property type="entry name" value="pyridoxal_pyridoxamine_kinase"/>
    <property type="match status" value="1"/>
</dbReference>
<dbReference type="Gene3D" id="3.40.1190.20">
    <property type="match status" value="1"/>
</dbReference>
<dbReference type="HAMAP" id="MF_01638">
    <property type="entry name" value="PdxK"/>
    <property type="match status" value="1"/>
</dbReference>
<dbReference type="InterPro" id="IPR023479">
    <property type="entry name" value="PdxK"/>
</dbReference>
<dbReference type="InterPro" id="IPR013749">
    <property type="entry name" value="PM/HMP-P_kinase-1"/>
</dbReference>
<dbReference type="InterPro" id="IPR004625">
    <property type="entry name" value="PyrdxlKinase"/>
</dbReference>
<dbReference type="InterPro" id="IPR029056">
    <property type="entry name" value="Ribokinase-like"/>
</dbReference>
<dbReference type="NCBIfam" id="NF006034">
    <property type="entry name" value="PRK08176.1"/>
    <property type="match status" value="1"/>
</dbReference>
<dbReference type="NCBIfam" id="TIGR00687">
    <property type="entry name" value="pyridox_kin"/>
    <property type="match status" value="1"/>
</dbReference>
<dbReference type="PANTHER" id="PTHR10534">
    <property type="entry name" value="PYRIDOXAL KINASE"/>
    <property type="match status" value="1"/>
</dbReference>
<dbReference type="PANTHER" id="PTHR10534:SF15">
    <property type="entry name" value="PYRIDOXINE_PYRIDOXAL_PYRIDOXAMINE KINASE"/>
    <property type="match status" value="1"/>
</dbReference>
<dbReference type="Pfam" id="PF08543">
    <property type="entry name" value="Phos_pyr_kin"/>
    <property type="match status" value="1"/>
</dbReference>
<dbReference type="SUPFAM" id="SSF53613">
    <property type="entry name" value="Ribokinase-like"/>
    <property type="match status" value="1"/>
</dbReference>
<feature type="chain" id="PRO_0000268831" description="Pyridoxine/pyridoxal/pyridoxamine kinase">
    <location>
        <begin position="1"/>
        <end position="296"/>
    </location>
</feature>
<feature type="binding site" evidence="1">
    <location>
        <position position="23"/>
    </location>
    <ligand>
        <name>substrate</name>
    </ligand>
</feature>
<feature type="binding site" evidence="1">
    <location>
        <position position="59"/>
    </location>
    <ligand>
        <name>substrate</name>
    </ligand>
</feature>
<feature type="binding site" evidence="1">
    <location>
        <position position="125"/>
    </location>
    <ligand>
        <name>ATP</name>
        <dbReference type="ChEBI" id="CHEBI:30616"/>
    </ligand>
</feature>
<feature type="binding site" evidence="1">
    <location>
        <position position="136"/>
    </location>
    <ligand>
        <name>Mg(2+)</name>
        <dbReference type="ChEBI" id="CHEBI:18420"/>
    </ligand>
</feature>
<feature type="binding site" evidence="1">
    <location>
        <position position="157"/>
    </location>
    <ligand>
        <name>ATP</name>
        <dbReference type="ChEBI" id="CHEBI:30616"/>
    </ligand>
</feature>
<feature type="binding site" evidence="1">
    <location>
        <position position="162"/>
    </location>
    <ligand>
        <name>ATP</name>
        <dbReference type="ChEBI" id="CHEBI:30616"/>
    </ligand>
</feature>
<feature type="binding site" evidence="1">
    <location>
        <position position="162"/>
    </location>
    <ligand>
        <name>Mg(2+)</name>
        <dbReference type="ChEBI" id="CHEBI:18420"/>
    </ligand>
</feature>
<feature type="binding site" evidence="1">
    <location>
        <position position="195"/>
    </location>
    <ligand>
        <name>ATP</name>
        <dbReference type="ChEBI" id="CHEBI:30616"/>
    </ligand>
</feature>
<feature type="binding site" evidence="1">
    <location>
        <begin position="222"/>
        <end position="225"/>
    </location>
    <ligand>
        <name>ATP</name>
        <dbReference type="ChEBI" id="CHEBI:30616"/>
    </ligand>
</feature>
<feature type="binding site" evidence="1">
    <location>
        <position position="232"/>
    </location>
    <ligand>
        <name>ATP</name>
        <dbReference type="ChEBI" id="CHEBI:30616"/>
    </ligand>
</feature>
<feature type="binding site" evidence="1">
    <location>
        <position position="234"/>
    </location>
    <ligand>
        <name>substrate</name>
    </ligand>
</feature>
<protein>
    <recommendedName>
        <fullName evidence="1">Pyridoxine/pyridoxal/pyridoxamine kinase</fullName>
        <shortName evidence="1">PN/PL/PM kinase</shortName>
        <ecNumber evidence="1">2.7.1.35</ecNumber>
    </recommendedName>
    <alternativeName>
        <fullName evidence="1">B6-vitamer kinase</fullName>
    </alternativeName>
</protein>
<keyword id="KW-0067">ATP-binding</keyword>
<keyword id="KW-0418">Kinase</keyword>
<keyword id="KW-0460">Magnesium</keyword>
<keyword id="KW-0479">Metal-binding</keyword>
<keyword id="KW-0547">Nucleotide-binding</keyword>
<keyword id="KW-1185">Reference proteome</keyword>
<keyword id="KW-0808">Transferase</keyword>
<keyword id="KW-0862">Zinc</keyword>
<organism>
    <name type="scientific">Bordetella avium (strain 197N)</name>
    <dbReference type="NCBI Taxonomy" id="360910"/>
    <lineage>
        <taxon>Bacteria</taxon>
        <taxon>Pseudomonadati</taxon>
        <taxon>Pseudomonadota</taxon>
        <taxon>Betaproteobacteria</taxon>
        <taxon>Burkholderiales</taxon>
        <taxon>Alcaligenaceae</taxon>
        <taxon>Bordetella</taxon>
    </lineage>
</organism>
<name>PDXK_BORA1</name>
<evidence type="ECO:0000255" key="1">
    <source>
        <dbReference type="HAMAP-Rule" id="MF_01638"/>
    </source>
</evidence>
<sequence>MSSGQGYVASGRPLLFDVVSVQSQVVYGHVGNNVAAPALRAHGLHPGIVPTVLLSNTPHYPTLHGGALPLSWFEGYLQDLQARGALQALRAILVGYLGSAEQARVLGRWIARIREVHPQVLVIVDPVMGDDDHGLYVTEGLAEASRECLVPQAHGLTPNSFELGLLTGCEVGRVDQAVAAARRLLAQGLRWVVVTSAAQQDCPPGQVQLLAVTASQAHLLRHQRVDTAPKGTGDLFCAELTAHLLAGASLERAVEASSRYLVQALACTRLADSAELLMPSRDPAQAQAVQWIPLEN</sequence>
<comment type="function">
    <text evidence="1">B6-vitamer kinase involved in the salvage pathway of pyridoxal 5'-phosphate (PLP). Catalyzes the phosphorylation of pyridoxine (PN), pyridoxal (PL), and pyridoxamine (PM), forming their respective 5'-phosphorylated esters, i.e. PNP, PLP and PMP.</text>
</comment>
<comment type="catalytic activity">
    <reaction evidence="1">
        <text>pyridoxal + ATP = pyridoxal 5'-phosphate + ADP + H(+)</text>
        <dbReference type="Rhea" id="RHEA:10224"/>
        <dbReference type="ChEBI" id="CHEBI:15378"/>
        <dbReference type="ChEBI" id="CHEBI:17310"/>
        <dbReference type="ChEBI" id="CHEBI:30616"/>
        <dbReference type="ChEBI" id="CHEBI:456216"/>
        <dbReference type="ChEBI" id="CHEBI:597326"/>
        <dbReference type="EC" id="2.7.1.35"/>
    </reaction>
</comment>
<comment type="catalytic activity">
    <reaction evidence="1">
        <text>pyridoxine + ATP = pyridoxine 5'-phosphate + ADP + H(+)</text>
        <dbReference type="Rhea" id="RHEA:25108"/>
        <dbReference type="ChEBI" id="CHEBI:15378"/>
        <dbReference type="ChEBI" id="CHEBI:16709"/>
        <dbReference type="ChEBI" id="CHEBI:30616"/>
        <dbReference type="ChEBI" id="CHEBI:58589"/>
        <dbReference type="ChEBI" id="CHEBI:456216"/>
        <dbReference type="EC" id="2.7.1.35"/>
    </reaction>
</comment>
<comment type="catalytic activity">
    <reaction evidence="1">
        <text>pyridoxamine + ATP = pyridoxamine 5'-phosphate + ADP + H(+)</text>
        <dbReference type="Rhea" id="RHEA:25104"/>
        <dbReference type="ChEBI" id="CHEBI:15378"/>
        <dbReference type="ChEBI" id="CHEBI:30616"/>
        <dbReference type="ChEBI" id="CHEBI:57761"/>
        <dbReference type="ChEBI" id="CHEBI:58451"/>
        <dbReference type="ChEBI" id="CHEBI:456216"/>
        <dbReference type="EC" id="2.7.1.35"/>
    </reaction>
</comment>
<comment type="cofactor">
    <cofactor evidence="1">
        <name>Mg(2+)</name>
        <dbReference type="ChEBI" id="CHEBI:18420"/>
    </cofactor>
</comment>
<comment type="pathway">
    <text evidence="1">Cofactor metabolism; pyridoxal 5'-phosphate salvage; pyridoxal 5'-phosphate from pyridoxal: step 1/1.</text>
</comment>
<comment type="pathway">
    <text evidence="1">Cofactor metabolism; pyridoxal 5'-phosphate salvage; pyridoxine 5'-phosphate from pyridoxine: step 1/1.</text>
</comment>
<comment type="pathway">
    <text evidence="1">Cofactor metabolism; pyridoxal 5'-phosphate salvage; pyridoxamine 5'-phosphate from pyridoxamine: step 1/1.</text>
</comment>
<comment type="subunit">
    <text evidence="1">Homodimer.</text>
</comment>
<comment type="similarity">
    <text evidence="1">Belongs to the pyridoxine kinase family. PdxK subfamily.</text>
</comment>
<proteinExistence type="inferred from homology"/>